<name>HIS1_BACC0</name>
<sequence>MRNIQIALTKGRLEKHVIPLFEQIGIDCSELKNKGRKLVFQSKNTDISFILVKAVDVATYVEHGVADIGVVGKDILMENEKDIYEMLDLGVGVCKFCVASIPTYNPKSYRKKCIATKYPHITSNYFHNKGEDVEIIKIEGSVEIAPILGLADAIVDIVETGKTLQENGLIVFEEMYSISARMIVNKAALKTKKDEIFSIVNMMEQEILSGK</sequence>
<protein>
    <recommendedName>
        <fullName evidence="1">ATP phosphoribosyltransferase</fullName>
        <shortName evidence="1">ATP-PRT</shortName>
        <shortName evidence="1">ATP-PRTase</shortName>
        <ecNumber evidence="1">2.4.2.17</ecNumber>
    </recommendedName>
</protein>
<accession>B7JFZ0</accession>
<reference key="1">
    <citation type="submission" date="2008-10" db="EMBL/GenBank/DDBJ databases">
        <title>Genome sequence of Bacillus cereus AH820.</title>
        <authorList>
            <person name="Dodson R.J."/>
            <person name="Durkin A.S."/>
            <person name="Rosovitz M.J."/>
            <person name="Rasko D.A."/>
            <person name="Hoffmaster A."/>
            <person name="Ravel J."/>
            <person name="Sutton G."/>
        </authorList>
    </citation>
    <scope>NUCLEOTIDE SEQUENCE [LARGE SCALE GENOMIC DNA]</scope>
    <source>
        <strain>AH820</strain>
    </source>
</reference>
<gene>
    <name evidence="1" type="primary">hisG</name>
    <name type="ordered locus">BCAH820_1496</name>
</gene>
<comment type="function">
    <text evidence="1">Catalyzes the condensation of ATP and 5-phosphoribose 1-diphosphate to form N'-(5'-phosphoribosyl)-ATP (PR-ATP). Has a crucial role in the pathway because the rate of histidine biosynthesis seems to be controlled primarily by regulation of HisG enzymatic activity.</text>
</comment>
<comment type="catalytic activity">
    <reaction evidence="1">
        <text>1-(5-phospho-beta-D-ribosyl)-ATP + diphosphate = 5-phospho-alpha-D-ribose 1-diphosphate + ATP</text>
        <dbReference type="Rhea" id="RHEA:18473"/>
        <dbReference type="ChEBI" id="CHEBI:30616"/>
        <dbReference type="ChEBI" id="CHEBI:33019"/>
        <dbReference type="ChEBI" id="CHEBI:58017"/>
        <dbReference type="ChEBI" id="CHEBI:73183"/>
        <dbReference type="EC" id="2.4.2.17"/>
    </reaction>
</comment>
<comment type="pathway">
    <text evidence="1">Amino-acid biosynthesis; L-histidine biosynthesis; L-histidine from 5-phospho-alpha-D-ribose 1-diphosphate: step 1/9.</text>
</comment>
<comment type="subunit">
    <text evidence="1">Heteromultimer composed of HisG and HisZ subunits.</text>
</comment>
<comment type="subcellular location">
    <subcellularLocation>
        <location evidence="1">Cytoplasm</location>
    </subcellularLocation>
</comment>
<comment type="domain">
    <text>Lacks the C-terminal regulatory region which is replaced by HisZ.</text>
</comment>
<comment type="similarity">
    <text evidence="1">Belongs to the ATP phosphoribosyltransferase family. Short subfamily.</text>
</comment>
<dbReference type="EC" id="2.4.2.17" evidence="1"/>
<dbReference type="EMBL" id="CP001283">
    <property type="protein sequence ID" value="ACK91665.1"/>
    <property type="molecule type" value="Genomic_DNA"/>
</dbReference>
<dbReference type="RefSeq" id="WP_001244473.1">
    <property type="nucleotide sequence ID" value="NC_011773.1"/>
</dbReference>
<dbReference type="SMR" id="B7JFZ0"/>
<dbReference type="KEGG" id="bcu:BCAH820_1496"/>
<dbReference type="HOGENOM" id="CLU_038115_2_0_9"/>
<dbReference type="UniPathway" id="UPA00031">
    <property type="reaction ID" value="UER00006"/>
</dbReference>
<dbReference type="Proteomes" id="UP000001363">
    <property type="component" value="Chromosome"/>
</dbReference>
<dbReference type="GO" id="GO:0005737">
    <property type="term" value="C:cytoplasm"/>
    <property type="evidence" value="ECO:0007669"/>
    <property type="project" value="UniProtKB-SubCell"/>
</dbReference>
<dbReference type="GO" id="GO:0005524">
    <property type="term" value="F:ATP binding"/>
    <property type="evidence" value="ECO:0007669"/>
    <property type="project" value="UniProtKB-KW"/>
</dbReference>
<dbReference type="GO" id="GO:0003879">
    <property type="term" value="F:ATP phosphoribosyltransferase activity"/>
    <property type="evidence" value="ECO:0007669"/>
    <property type="project" value="UniProtKB-UniRule"/>
</dbReference>
<dbReference type="GO" id="GO:0000105">
    <property type="term" value="P:L-histidine biosynthetic process"/>
    <property type="evidence" value="ECO:0007669"/>
    <property type="project" value="UniProtKB-UniRule"/>
</dbReference>
<dbReference type="CDD" id="cd13595">
    <property type="entry name" value="PBP2_HisGs"/>
    <property type="match status" value="1"/>
</dbReference>
<dbReference type="FunFam" id="3.40.190.10:FF:000011">
    <property type="entry name" value="ATP phosphoribosyltransferase"/>
    <property type="match status" value="1"/>
</dbReference>
<dbReference type="Gene3D" id="3.40.190.10">
    <property type="entry name" value="Periplasmic binding protein-like II"/>
    <property type="match status" value="2"/>
</dbReference>
<dbReference type="HAMAP" id="MF_01018">
    <property type="entry name" value="HisG_Short"/>
    <property type="match status" value="1"/>
</dbReference>
<dbReference type="InterPro" id="IPR013820">
    <property type="entry name" value="ATP_PRibTrfase_cat"/>
</dbReference>
<dbReference type="InterPro" id="IPR018198">
    <property type="entry name" value="ATP_PRibTrfase_CS"/>
</dbReference>
<dbReference type="InterPro" id="IPR001348">
    <property type="entry name" value="ATP_PRibTrfase_HisG"/>
</dbReference>
<dbReference type="InterPro" id="IPR024893">
    <property type="entry name" value="ATP_PRibTrfase_HisG_short"/>
</dbReference>
<dbReference type="NCBIfam" id="TIGR00070">
    <property type="entry name" value="hisG"/>
    <property type="match status" value="1"/>
</dbReference>
<dbReference type="PANTHER" id="PTHR21403:SF8">
    <property type="entry name" value="ATP PHOSPHORIBOSYLTRANSFERASE"/>
    <property type="match status" value="1"/>
</dbReference>
<dbReference type="PANTHER" id="PTHR21403">
    <property type="entry name" value="ATP PHOSPHORIBOSYLTRANSFERASE ATP-PRTASE"/>
    <property type="match status" value="1"/>
</dbReference>
<dbReference type="Pfam" id="PF01634">
    <property type="entry name" value="HisG"/>
    <property type="match status" value="1"/>
</dbReference>
<dbReference type="SUPFAM" id="SSF53850">
    <property type="entry name" value="Periplasmic binding protein-like II"/>
    <property type="match status" value="1"/>
</dbReference>
<dbReference type="PROSITE" id="PS01316">
    <property type="entry name" value="ATP_P_PHORIBOSYLTR"/>
    <property type="match status" value="1"/>
</dbReference>
<organism>
    <name type="scientific">Bacillus cereus (strain AH820)</name>
    <dbReference type="NCBI Taxonomy" id="405535"/>
    <lineage>
        <taxon>Bacteria</taxon>
        <taxon>Bacillati</taxon>
        <taxon>Bacillota</taxon>
        <taxon>Bacilli</taxon>
        <taxon>Bacillales</taxon>
        <taxon>Bacillaceae</taxon>
        <taxon>Bacillus</taxon>
        <taxon>Bacillus cereus group</taxon>
    </lineage>
</organism>
<proteinExistence type="inferred from homology"/>
<feature type="chain" id="PRO_1000135266" description="ATP phosphoribosyltransferase">
    <location>
        <begin position="1"/>
        <end position="211"/>
    </location>
</feature>
<keyword id="KW-0028">Amino-acid biosynthesis</keyword>
<keyword id="KW-0067">ATP-binding</keyword>
<keyword id="KW-0963">Cytoplasm</keyword>
<keyword id="KW-0328">Glycosyltransferase</keyword>
<keyword id="KW-0368">Histidine biosynthesis</keyword>
<keyword id="KW-0547">Nucleotide-binding</keyword>
<keyword id="KW-0808">Transferase</keyword>
<evidence type="ECO:0000255" key="1">
    <source>
        <dbReference type="HAMAP-Rule" id="MF_01018"/>
    </source>
</evidence>